<proteinExistence type="inferred from homology"/>
<sequence length="262" mass="28947">MLERMQEALQRLRKERPVILNTTNYVSMDFLANCFLAIGASPIMSVSDLELEELIELSSAVYINIGTLDHLFIQRAYRTVDLAVRQNKPVIFDPVAAGATKIRTEVSHHLLAHATIVRGNASEILSFGDVTMKTRGVDSTHSTQDAKDVATALAKECLCGCAIAVSGAIDFITDGQRHTTVELGDPFMSYVVGMGCSLTGVFAAFRSVIDDSFEATKLGIEYFTLCGMLARERCEGPGLFKAYLLDELYASDFSRMRQYYDR</sequence>
<gene>
    <name evidence="1" type="primary">thiM</name>
    <name type="ordered locus">CAB199</name>
</gene>
<evidence type="ECO:0000255" key="1">
    <source>
        <dbReference type="HAMAP-Rule" id="MF_00228"/>
    </source>
</evidence>
<feature type="chain" id="PRO_0000383832" description="Hydroxyethylthiazole kinase">
    <location>
        <begin position="1"/>
        <end position="262"/>
    </location>
</feature>
<feature type="binding site" evidence="1">
    <location>
        <position position="44"/>
    </location>
    <ligand>
        <name>substrate</name>
    </ligand>
</feature>
<feature type="binding site" evidence="1">
    <location>
        <position position="118"/>
    </location>
    <ligand>
        <name>ATP</name>
        <dbReference type="ChEBI" id="CHEBI:30616"/>
    </ligand>
</feature>
<feature type="binding site" evidence="1">
    <location>
        <position position="166"/>
    </location>
    <ligand>
        <name>ATP</name>
        <dbReference type="ChEBI" id="CHEBI:30616"/>
    </ligand>
</feature>
<feature type="binding site" evidence="1">
    <location>
        <position position="193"/>
    </location>
    <ligand>
        <name>substrate</name>
    </ligand>
</feature>
<protein>
    <recommendedName>
        <fullName evidence="1">Hydroxyethylthiazole kinase</fullName>
        <ecNumber evidence="1">2.7.1.50</ecNumber>
    </recommendedName>
    <alternativeName>
        <fullName evidence="1">4-methyl-5-beta-hydroxyethylthiazole kinase</fullName>
        <shortName evidence="1">TH kinase</shortName>
        <shortName evidence="1">Thz kinase</shortName>
    </alternativeName>
</protein>
<dbReference type="EC" id="2.7.1.50" evidence="1"/>
<dbReference type="EMBL" id="CR848038">
    <property type="protein sequence ID" value="CAH63657.1"/>
    <property type="molecule type" value="Genomic_DNA"/>
</dbReference>
<dbReference type="RefSeq" id="WP_011096893.1">
    <property type="nucleotide sequence ID" value="NC_004552.2"/>
</dbReference>
<dbReference type="SMR" id="Q5L6R4"/>
<dbReference type="KEGG" id="cab:CAB199"/>
<dbReference type="eggNOG" id="COG2145">
    <property type="taxonomic scope" value="Bacteria"/>
</dbReference>
<dbReference type="HOGENOM" id="CLU_019943_0_1_0"/>
<dbReference type="OrthoDB" id="9778146at2"/>
<dbReference type="UniPathway" id="UPA00060">
    <property type="reaction ID" value="UER00139"/>
</dbReference>
<dbReference type="Proteomes" id="UP000001012">
    <property type="component" value="Chromosome"/>
</dbReference>
<dbReference type="GO" id="GO:0005524">
    <property type="term" value="F:ATP binding"/>
    <property type="evidence" value="ECO:0007669"/>
    <property type="project" value="UniProtKB-UniRule"/>
</dbReference>
<dbReference type="GO" id="GO:0004417">
    <property type="term" value="F:hydroxyethylthiazole kinase activity"/>
    <property type="evidence" value="ECO:0007669"/>
    <property type="project" value="UniProtKB-UniRule"/>
</dbReference>
<dbReference type="GO" id="GO:0000287">
    <property type="term" value="F:magnesium ion binding"/>
    <property type="evidence" value="ECO:0007669"/>
    <property type="project" value="UniProtKB-UniRule"/>
</dbReference>
<dbReference type="GO" id="GO:0009228">
    <property type="term" value="P:thiamine biosynthetic process"/>
    <property type="evidence" value="ECO:0007669"/>
    <property type="project" value="UniProtKB-KW"/>
</dbReference>
<dbReference type="GO" id="GO:0009229">
    <property type="term" value="P:thiamine diphosphate biosynthetic process"/>
    <property type="evidence" value="ECO:0007669"/>
    <property type="project" value="UniProtKB-UniRule"/>
</dbReference>
<dbReference type="CDD" id="cd01170">
    <property type="entry name" value="THZ_kinase"/>
    <property type="match status" value="1"/>
</dbReference>
<dbReference type="Gene3D" id="3.40.1190.20">
    <property type="match status" value="1"/>
</dbReference>
<dbReference type="HAMAP" id="MF_00228">
    <property type="entry name" value="Thz_kinase"/>
    <property type="match status" value="1"/>
</dbReference>
<dbReference type="InterPro" id="IPR000417">
    <property type="entry name" value="Hyethyz_kinase"/>
</dbReference>
<dbReference type="InterPro" id="IPR029056">
    <property type="entry name" value="Ribokinase-like"/>
</dbReference>
<dbReference type="NCBIfam" id="NF006830">
    <property type="entry name" value="PRK09355.1"/>
    <property type="match status" value="1"/>
</dbReference>
<dbReference type="Pfam" id="PF02110">
    <property type="entry name" value="HK"/>
    <property type="match status" value="1"/>
</dbReference>
<dbReference type="PIRSF" id="PIRSF000513">
    <property type="entry name" value="Thz_kinase"/>
    <property type="match status" value="1"/>
</dbReference>
<dbReference type="PRINTS" id="PR01099">
    <property type="entry name" value="HYETHTZKNASE"/>
</dbReference>
<dbReference type="SUPFAM" id="SSF53613">
    <property type="entry name" value="Ribokinase-like"/>
    <property type="match status" value="1"/>
</dbReference>
<keyword id="KW-0067">ATP-binding</keyword>
<keyword id="KW-0418">Kinase</keyword>
<keyword id="KW-0460">Magnesium</keyword>
<keyword id="KW-0479">Metal-binding</keyword>
<keyword id="KW-0547">Nucleotide-binding</keyword>
<keyword id="KW-0784">Thiamine biosynthesis</keyword>
<keyword id="KW-0808">Transferase</keyword>
<comment type="function">
    <text evidence="1">Catalyzes the phosphorylation of the hydroxyl group of 4-methyl-5-beta-hydroxyethylthiazole (THZ).</text>
</comment>
<comment type="catalytic activity">
    <reaction evidence="1">
        <text>5-(2-hydroxyethyl)-4-methylthiazole + ATP = 4-methyl-5-(2-phosphooxyethyl)-thiazole + ADP + H(+)</text>
        <dbReference type="Rhea" id="RHEA:24212"/>
        <dbReference type="ChEBI" id="CHEBI:15378"/>
        <dbReference type="ChEBI" id="CHEBI:17957"/>
        <dbReference type="ChEBI" id="CHEBI:30616"/>
        <dbReference type="ChEBI" id="CHEBI:58296"/>
        <dbReference type="ChEBI" id="CHEBI:456216"/>
        <dbReference type="EC" id="2.7.1.50"/>
    </reaction>
</comment>
<comment type="cofactor">
    <cofactor evidence="1">
        <name>Mg(2+)</name>
        <dbReference type="ChEBI" id="CHEBI:18420"/>
    </cofactor>
</comment>
<comment type="pathway">
    <text evidence="1">Cofactor biosynthesis; thiamine diphosphate biosynthesis; 4-methyl-5-(2-phosphoethyl)-thiazole from 5-(2-hydroxyethyl)-4-methylthiazole: step 1/1.</text>
</comment>
<comment type="similarity">
    <text evidence="1">Belongs to the Thz kinase family.</text>
</comment>
<organism>
    <name type="scientific">Chlamydia abortus (strain DSM 27085 / S26/3)</name>
    <name type="common">Chlamydophila abortus</name>
    <dbReference type="NCBI Taxonomy" id="218497"/>
    <lineage>
        <taxon>Bacteria</taxon>
        <taxon>Pseudomonadati</taxon>
        <taxon>Chlamydiota</taxon>
        <taxon>Chlamydiia</taxon>
        <taxon>Chlamydiales</taxon>
        <taxon>Chlamydiaceae</taxon>
        <taxon>Chlamydia/Chlamydophila group</taxon>
        <taxon>Chlamydia</taxon>
    </lineage>
</organism>
<name>THIM_CHLAB</name>
<reference key="1">
    <citation type="journal article" date="2005" name="Genome Res.">
        <title>The Chlamydophila abortus genome sequence reveals an array of variable proteins that contribute to interspecies variation.</title>
        <authorList>
            <person name="Thomson N.R."/>
            <person name="Yeats C."/>
            <person name="Bell K."/>
            <person name="Holden M.T.G."/>
            <person name="Bentley S.D."/>
            <person name="Livingstone M."/>
            <person name="Cerdeno-Tarraga A.-M."/>
            <person name="Harris B."/>
            <person name="Doggett J."/>
            <person name="Ormond D."/>
            <person name="Mungall K."/>
            <person name="Clarke K."/>
            <person name="Feltwell T."/>
            <person name="Hance Z."/>
            <person name="Sanders M."/>
            <person name="Quail M.A."/>
            <person name="Price C."/>
            <person name="Barrell B.G."/>
            <person name="Parkhill J."/>
            <person name="Longbottom D."/>
        </authorList>
    </citation>
    <scope>NUCLEOTIDE SEQUENCE [LARGE SCALE GENOMIC DNA]</scope>
    <source>
        <strain>DSM 27085 / S26/3</strain>
    </source>
</reference>
<accession>Q5L6R4</accession>